<feature type="chain" id="PRO_0000195042" description="High affinity copper uptake protein 1">
    <location>
        <begin position="1"/>
        <end position="187"/>
    </location>
</feature>
<feature type="chain" id="PRO_0000458012" description="Truncated CTR1 form" evidence="1">
    <location>
        <begin position="40"/>
        <end position="187"/>
    </location>
</feature>
<feature type="topological domain" description="Extracellular" evidence="3">
    <location>
        <begin position="1"/>
        <end position="65"/>
    </location>
</feature>
<feature type="transmembrane region" description="Helical" evidence="3">
    <location>
        <begin position="66"/>
        <end position="86"/>
    </location>
</feature>
<feature type="topological domain" description="Cytoplasmic" evidence="3">
    <location>
        <begin position="87"/>
        <end position="129"/>
    </location>
</feature>
<feature type="transmembrane region" description="Helical" evidence="3">
    <location>
        <begin position="130"/>
        <end position="150"/>
    </location>
</feature>
<feature type="topological domain" description="Extracellular" evidence="3">
    <location>
        <begin position="151"/>
        <end position="153"/>
    </location>
</feature>
<feature type="transmembrane region" description="Helical" evidence="3">
    <location>
        <begin position="154"/>
        <end position="174"/>
    </location>
</feature>
<feature type="topological domain" description="Cytoplasmic" evidence="3">
    <location>
        <begin position="175"/>
        <end position="187"/>
    </location>
</feature>
<feature type="short sequence motif" description="Bis-His motif" evidence="1">
    <location>
        <begin position="9"/>
        <end position="10"/>
    </location>
</feature>
<feature type="site" description="Cleavage" evidence="1">
    <location>
        <begin position="39"/>
        <end position="40"/>
    </location>
</feature>
<feature type="modified residue" description="Phosphothreonine" evidence="1">
    <location>
        <position position="111"/>
    </location>
</feature>
<feature type="modified residue" description="Cysteine sulfenic acid (-SOH)" evidence="1">
    <location>
        <position position="186"/>
    </location>
</feature>
<feature type="glycosylation site" description="N-linked (GlcNAc...) asparagine" evidence="1">
    <location>
        <position position="19"/>
    </location>
</feature>
<feature type="glycosylation site" description="O-linked (GalNAc...) threonine" evidence="1">
    <location>
        <position position="30"/>
    </location>
</feature>
<feature type="disulfide bond" description="Interchain (with C-1208 in KDR)" evidence="1">
    <location>
        <position position="186"/>
    </location>
</feature>
<reference key="1">
    <citation type="submission" date="2000-05" db="EMBL/GenBank/DDBJ databases">
        <title>Molecular cloning of rat copper transport protein 1.</title>
        <authorList>
            <person name="Chino H."/>
            <person name="Hiromura M."/>
            <person name="Sonoda T."/>
            <person name="Yasui H."/>
            <person name="Sakurai H."/>
        </authorList>
    </citation>
    <scope>NUCLEOTIDE SEQUENCE [MRNA]</scope>
    <source>
        <strain>Sprague-Dawley</strain>
    </source>
</reference>
<reference key="2">
    <citation type="submission" date="2004-02" db="EMBL/GenBank/DDBJ databases">
        <title>Liver regeneration after PH.</title>
        <authorList>
            <person name="Xu C.S."/>
            <person name="Zhang L."/>
            <person name="Chang C.F."/>
            <person name="Han H.P."/>
            <person name="Wang G.P."/>
            <person name="Chai L.Q."/>
            <person name="Yuan J.Y."/>
            <person name="Yang K.J."/>
            <person name="Zhao L.F."/>
            <person name="Ma H."/>
            <person name="Wang L."/>
            <person name="Wang S.F."/>
            <person name="Xing X.K."/>
            <person name="Shen G.M."/>
            <person name="Shi J.B."/>
            <person name="Rahman S."/>
            <person name="Wang Q.N."/>
            <person name="Zhang J.B."/>
        </authorList>
    </citation>
    <scope>NUCLEOTIDE SEQUENCE [LARGE SCALE MRNA]</scope>
    <source>
        <strain>Sprague-Dawley</strain>
        <tissue>Liver</tissue>
    </source>
</reference>
<reference key="3">
    <citation type="journal article" date="2004" name="Genome Res.">
        <title>The status, quality, and expansion of the NIH full-length cDNA project: the Mammalian Gene Collection (MGC).</title>
        <authorList>
            <consortium name="The MGC Project Team"/>
        </authorList>
    </citation>
    <scope>NUCLEOTIDE SEQUENCE [LARGE SCALE MRNA]</scope>
    <source>
        <tissue>Kidney</tissue>
    </source>
</reference>
<reference key="4">
    <citation type="journal article" date="2010" name="J. Biol. Chem.">
        <title>Ctr1 is an apical copper transporter in mammalian intestinal epithelial cells in vivo that is controlled at the level of protein stability.</title>
        <authorList>
            <person name="Nose Y."/>
            <person name="Wood L.K."/>
            <person name="Kim B.E."/>
            <person name="Prohaska J.R."/>
            <person name="Fry R.S."/>
            <person name="Spears J.W."/>
            <person name="Thiele D.J."/>
        </authorList>
    </citation>
    <scope>SUBCELLULAR LOCATION</scope>
</reference>
<reference key="5">
    <citation type="journal article" date="2013" name="Biochem. Pharmacol.">
        <title>Contributions of rat Ctr1 to the uptake and toxicity of copper and platinum anticancer drugs in dorsal root ganglion neurons.</title>
        <authorList>
            <person name="Liu J.J."/>
            <person name="Kim Y."/>
            <person name="Yan F."/>
            <person name="Ding Q."/>
            <person name="Ip V."/>
            <person name="Jong N.N."/>
            <person name="Mercer J.F."/>
            <person name="McKeage M.J."/>
        </authorList>
    </citation>
    <scope>FUNCTION</scope>
    <scope>TRANSPORTER ACTIVITY</scope>
    <scope>ACTIVITY REGULATION</scope>
    <scope>SUBCELLULAR LOCATION</scope>
</reference>
<name>COPT1_RAT</name>
<accession>Q9JK41</accession>
<accession>Q53YN6</accession>
<protein>
    <recommendedName>
        <fullName evidence="7">High affinity copper uptake protein 1</fullName>
    </recommendedName>
    <alternativeName>
        <fullName evidence="6">Copper transporter 1</fullName>
        <shortName evidence="6">rCTR1</shortName>
    </alternativeName>
    <alternativeName>
        <fullName>Liver regeneration-related protein LRRGT00200</fullName>
    </alternativeName>
    <alternativeName>
        <fullName>Solute carrier family 31 member 1</fullName>
    </alternativeName>
    <component>
        <recommendedName>
            <fullName evidence="1">Truncated CTR1 form</fullName>
        </recommendedName>
    </component>
</protein>
<sequence>MRMNHMEMHHMGMNHTDDNITMPPHQHPTTSASHSHEMMMPMTFYFGFKNVDLLFSSLVINTPGEMAGAFVAVFLLAMFYEGLKIAREGLLRKSQVSIRYNSMPVPGPNGTILMETHKTVGQQMLSFPHLLQTVLHIIQVVISYFLMLIFMTYNGYLCIAVAAGAGTGYFLFSWKKAVVVDITEHCH</sequence>
<keyword id="KW-1003">Cell membrane</keyword>
<keyword id="KW-0186">Copper</keyword>
<keyword id="KW-0187">Copper transport</keyword>
<keyword id="KW-1015">Disulfide bond</keyword>
<keyword id="KW-0967">Endosome</keyword>
<keyword id="KW-0325">Glycoprotein</keyword>
<keyword id="KW-0406">Ion transport</keyword>
<keyword id="KW-0472">Membrane</keyword>
<keyword id="KW-0558">Oxidation</keyword>
<keyword id="KW-0597">Phosphoprotein</keyword>
<keyword id="KW-1185">Reference proteome</keyword>
<keyword id="KW-0812">Transmembrane</keyword>
<keyword id="KW-1133">Transmembrane helix</keyword>
<keyword id="KW-0813">Transport</keyword>
<comment type="function">
    <molecule>High affinity copper uptake protein 1</molecule>
    <text evidence="1 2 5">Uniporter that mediates the transport of copper(1+) from the extracellular space to the cytoplasm, across the plasma membrane (PubMed:23123662). Then, delivers directly copper(1+) to specific chaperone such as ATOX1, via a copper(1+)- mediated transient interaction between the C-terminal domain and a copper(1+) chaperone, thus controlling intracellular copper(1+) levels (By similarity). May function in copper(1+) import from the apical membrane thus may drive intestinal copper absorption (By similarity). The copper(1+) transport mechanism is sodium-independent, saturable and of high-affinity (PubMed:23123662). Also mediates the uptake of silver(1+) (By similarity). May function in the influx of the platinum-containing chemotherapeutic agents (PubMed:23123662). The platinum-containing chemotherapeutic agents uptake is saturable (PubMed:23123662). Also participates in the first step of copper(2+) acquisition by cells through a direct transfer of copper(2+) from copper(2+) carriers in blood, such as ALB to the N-terminal domain of SLC31A1, leading to copper(2+) reduction and probably followed by copper(1+) stabilization (By similarity). In addition, functions as a redox sensor to promote angiogenesis in endothelial cells, in a copper(1+) transport independent manner, by transmitting the VEGF-induced ROS signal through a sulfenylation at Cys-189 leading to a subsequent disulfide bond formation between SLC31A1 and KDR (By similarity). The SLC31A1-KDR complex is then co-internalized to early endosomes, driving a sustained VEGFR2 signaling (By similarity).</text>
</comment>
<comment type="function">
    <molecule>Truncated CTR1 form</molecule>
    <text evidence="2">Mobilizes copper(1+) out of the endosomal compartment, making copper(1+) available for export out of the cells.</text>
</comment>
<comment type="catalytic activity">
    <reaction evidence="5">
        <text>Cu(+)(out) = Cu(+)(in)</text>
        <dbReference type="Rhea" id="RHEA:75211"/>
        <dbReference type="ChEBI" id="CHEBI:49552"/>
    </reaction>
</comment>
<comment type="catalytic activity">
    <reaction evidence="1">
        <text>Ag(+)(out) = Ag(+)(in)</text>
        <dbReference type="Rhea" id="RHEA:75207"/>
        <dbReference type="ChEBI" id="CHEBI:49468"/>
    </reaction>
</comment>
<comment type="activity regulation">
    <text evidence="5">Copper uptake is inhibited by cold temperature, silver and zinc ions (PubMed:23123662). Platinum-containing chemotherapeutic agents uptake is inhibited by cold temperature and copper (PubMed:23123662).</text>
</comment>
<comment type="subunit">
    <text evidence="1">Homotrimer; is stabilized by cisplatin via interactions between cisplatin and the methionine-rich clusters, and could be crucial for the copper(2+) reduction process and copper(1+) stabilization. Heterotrimer between SLC31A1, CCS and SOD1; this heterotrimer is copper(1+)-mediated and its maintenance is regulated through SOD1 activation. Interacts with KDR; this interaction is induced upon VEGFA stimulation leading to SLC31A1 and KDR subsequent co-internalization to early endosomes, thereby activating KDR downstream signaling in endothelial cells. Interacts (via C-terminal domain) with ATOX1 (via dimer form); this interaction improves ATOX1 stability and controls intracellular copper(1+) levels. Interacts with SLC31A2; this interaction stabilizes SLC31A2 and protects its from ubiquitination and degradation. Interacts (via C-terminal domain) with CCS; this interaction is copper(1+)-mediated.</text>
</comment>
<comment type="subcellular location">
    <subcellularLocation>
        <location evidence="5">Cell membrane</location>
        <topology evidence="3">Multi-pass membrane protein</topology>
    </subcellularLocation>
    <subcellularLocation>
        <location evidence="1">Early endosome membrane</location>
        <topology evidence="3">Multi-pass membrane protein</topology>
    </subcellularLocation>
    <subcellularLocation>
        <location evidence="1">Recycling endosome membrane</location>
        <topology evidence="3">Multi-pass membrane protein</topology>
    </subcellularLocation>
    <subcellularLocation>
        <location evidence="4">Apical cell membrane</location>
        <topology evidence="3">Multi-pass membrane protein</topology>
    </subcellularLocation>
    <subcellularLocation>
        <location evidence="2">Late endosome membrane</location>
        <topology evidence="3">Multi-pass membrane protein</topology>
    </subcellularLocation>
    <subcellularLocation>
        <location evidence="2">Basolateral cell membrane</location>
        <topology evidence="3">Multi-pass membrane protein</topology>
    </subcellularLocation>
    <text evidence="1 2 4 5">The localization is controlled by the intra and extra-cellular copper concentration. Under conditions of elevated extracellular copper concentrations, it is rapidly internalized by endocytosis from the plasma membrane by a clathrin- and dynamin-mediated process and degradated in order to prevent intracellular copper accumulation and to reduce the transport of the copper across the membrane. The internalized SLC31A1 is then localized in early endosomes, and, upon a low extracellular copper concentrations, it is transported back to the plasma membrane in a RAB11A-dependent recycling pathway (By similarity). Localizes to the apical membrane in intestinal epithelial cells (PubMed:20699218). Localizes to the neuronal cell body plasma membranes (PubMed:23123662). Mainly localized on the basolateral side of renal tubular cells (By similarity).</text>
</comment>
<comment type="domain">
    <text evidence="1">The C-terminal domain mediates copper(1+) binding and is involved in the copper(1+)-dependent-ATOX1 interaction. The C-terminal domain appears to act to limit transport through the pore by regulating the rate of exit of copper ions at the intracellular side. The N-terminal domain can collect copper(2+) from copper(2+) carriers in blood. The N-terminal domain, in the trimeric arrangement, tunes its reactivity with copper, promoting copper(2+) reduction and copper(1+) stabilization. The bis-His motif directly coordinate to copper(2+).</text>
</comment>
<comment type="PTM">
    <text evidence="1">O-Glycosylation at Thr-30 protects from proteolytic cleavage in the N-terminal extracellular domain.</text>
</comment>
<comment type="PTM">
    <text evidence="1">Proteolytic cleavage, leading to a truncated form, is facilitated by SLC31A2 and initiated preferentially by CTSL and to a minor extend by CTSB in endolysosomal compartments. A post-CTSL/cathepsin L processing occurs to yield to the fully truncated form.</text>
</comment>
<comment type="PTM">
    <text evidence="1">Sulfenylated at Cys-186 after stimulation with VEGFA, which induces SLC31A1-KDR disulfide bond formation and their co-internalization to early endosomes, driving to a sustained VEGFR2 signaling.</text>
</comment>
<comment type="similarity">
    <text evidence="7">Belongs to the copper transporter (Ctr) (TC 1.A.56) family. SLC31A subfamily.</text>
</comment>
<proteinExistence type="evidence at transcript level"/>
<gene>
    <name evidence="8" type="primary">Slc31a1</name>
    <name type="synonym">Copt1</name>
    <name evidence="6" type="synonym">Ctr1</name>
</gene>
<organism>
    <name type="scientific">Rattus norvegicus</name>
    <name type="common">Rat</name>
    <dbReference type="NCBI Taxonomy" id="10116"/>
    <lineage>
        <taxon>Eukaryota</taxon>
        <taxon>Metazoa</taxon>
        <taxon>Chordata</taxon>
        <taxon>Craniata</taxon>
        <taxon>Vertebrata</taxon>
        <taxon>Euteleostomi</taxon>
        <taxon>Mammalia</taxon>
        <taxon>Eutheria</taxon>
        <taxon>Euarchontoglires</taxon>
        <taxon>Glires</taxon>
        <taxon>Rodentia</taxon>
        <taxon>Myomorpha</taxon>
        <taxon>Muroidea</taxon>
        <taxon>Muridae</taxon>
        <taxon>Murinae</taxon>
        <taxon>Rattus</taxon>
    </lineage>
</organism>
<evidence type="ECO:0000250" key="1">
    <source>
        <dbReference type="UniProtKB" id="O15431"/>
    </source>
</evidence>
<evidence type="ECO:0000250" key="2">
    <source>
        <dbReference type="UniProtKB" id="Q8K211"/>
    </source>
</evidence>
<evidence type="ECO:0000255" key="3"/>
<evidence type="ECO:0000269" key="4">
    <source>
    </source>
</evidence>
<evidence type="ECO:0000269" key="5">
    <source>
    </source>
</evidence>
<evidence type="ECO:0000303" key="6">
    <source ref="1"/>
</evidence>
<evidence type="ECO:0000305" key="7"/>
<evidence type="ECO:0000312" key="8">
    <source>
        <dbReference type="RGD" id="620059"/>
    </source>
</evidence>
<dbReference type="EMBL" id="AF268030">
    <property type="protein sequence ID" value="AAF72546.1"/>
    <property type="molecule type" value="mRNA"/>
</dbReference>
<dbReference type="EMBL" id="AY539951">
    <property type="protein sequence ID" value="AAS66291.1"/>
    <property type="molecule type" value="mRNA"/>
</dbReference>
<dbReference type="EMBL" id="BC078745">
    <property type="protein sequence ID" value="AAH78745.1"/>
    <property type="molecule type" value="mRNA"/>
</dbReference>
<dbReference type="RefSeq" id="NP_598284.1">
    <property type="nucleotide sequence ID" value="NM_133600.3"/>
</dbReference>
<dbReference type="RefSeq" id="XP_038965150.1">
    <property type="nucleotide sequence ID" value="XM_039109222.2"/>
</dbReference>
<dbReference type="RefSeq" id="XP_063143186.1">
    <property type="nucleotide sequence ID" value="XM_063287116.1"/>
</dbReference>
<dbReference type="BMRB" id="Q9JK41"/>
<dbReference type="SMR" id="Q9JK41"/>
<dbReference type="FunCoup" id="Q9JK41">
    <property type="interactions" value="1612"/>
</dbReference>
<dbReference type="STRING" id="10116.ENSRNOP00000019544"/>
<dbReference type="GlyCosmos" id="Q9JK41">
    <property type="glycosylation" value="2 sites, No reported glycans"/>
</dbReference>
<dbReference type="GlyGen" id="Q9JK41">
    <property type="glycosylation" value="2 sites"/>
</dbReference>
<dbReference type="PhosphoSitePlus" id="Q9JK41"/>
<dbReference type="jPOST" id="Q9JK41"/>
<dbReference type="PaxDb" id="10116-ENSRNOP00000019544"/>
<dbReference type="GeneID" id="171135"/>
<dbReference type="KEGG" id="rno:171135"/>
<dbReference type="UCSC" id="RGD:620059">
    <property type="organism name" value="rat"/>
</dbReference>
<dbReference type="AGR" id="RGD:620059"/>
<dbReference type="CTD" id="1317"/>
<dbReference type="RGD" id="620059">
    <property type="gene designation" value="Slc31a1"/>
</dbReference>
<dbReference type="VEuPathDB" id="HostDB:ENSRNOG00000014475"/>
<dbReference type="eggNOG" id="KOG3386">
    <property type="taxonomic scope" value="Eukaryota"/>
</dbReference>
<dbReference type="HOGENOM" id="CLU_079690_2_0_1"/>
<dbReference type="InParanoid" id="Q9JK41"/>
<dbReference type="OrthoDB" id="61067at9989"/>
<dbReference type="PhylomeDB" id="Q9JK41"/>
<dbReference type="Reactome" id="R-RNO-425410">
    <property type="pathway name" value="Metal ion SLC transporters"/>
</dbReference>
<dbReference type="PRO" id="PR:Q9JK41"/>
<dbReference type="Proteomes" id="UP000002494">
    <property type="component" value="Chromosome 5"/>
</dbReference>
<dbReference type="Bgee" id="ENSRNOG00000014475">
    <property type="expression patterns" value="Expressed in jejunum and 18 other cell types or tissues"/>
</dbReference>
<dbReference type="GO" id="GO:0016324">
    <property type="term" value="C:apical plasma membrane"/>
    <property type="evidence" value="ECO:0000314"/>
    <property type="project" value="UniProtKB"/>
</dbReference>
<dbReference type="GO" id="GO:0016323">
    <property type="term" value="C:basolateral plasma membrane"/>
    <property type="evidence" value="ECO:0000250"/>
    <property type="project" value="UniProtKB"/>
</dbReference>
<dbReference type="GO" id="GO:0031901">
    <property type="term" value="C:early endosome membrane"/>
    <property type="evidence" value="ECO:0000250"/>
    <property type="project" value="UniProtKB"/>
</dbReference>
<dbReference type="GO" id="GO:0014704">
    <property type="term" value="C:intercalated disc"/>
    <property type="evidence" value="ECO:0000266"/>
    <property type="project" value="RGD"/>
</dbReference>
<dbReference type="GO" id="GO:0005770">
    <property type="term" value="C:late endosome"/>
    <property type="evidence" value="ECO:0000266"/>
    <property type="project" value="RGD"/>
</dbReference>
<dbReference type="GO" id="GO:0031902">
    <property type="term" value="C:late endosome membrane"/>
    <property type="evidence" value="ECO:0007669"/>
    <property type="project" value="UniProtKB-SubCell"/>
</dbReference>
<dbReference type="GO" id="GO:0043025">
    <property type="term" value="C:neuronal cell body"/>
    <property type="evidence" value="ECO:0000314"/>
    <property type="project" value="RGD"/>
</dbReference>
<dbReference type="GO" id="GO:0005886">
    <property type="term" value="C:plasma membrane"/>
    <property type="evidence" value="ECO:0000266"/>
    <property type="project" value="RGD"/>
</dbReference>
<dbReference type="GO" id="GO:0055037">
    <property type="term" value="C:recycling endosome"/>
    <property type="evidence" value="ECO:0000266"/>
    <property type="project" value="RGD"/>
</dbReference>
<dbReference type="GO" id="GO:0055038">
    <property type="term" value="C:recycling endosome membrane"/>
    <property type="evidence" value="ECO:0000250"/>
    <property type="project" value="UniProtKB"/>
</dbReference>
<dbReference type="GO" id="GO:0005507">
    <property type="term" value="F:copper ion binding"/>
    <property type="evidence" value="ECO:0000250"/>
    <property type="project" value="UniProtKB"/>
</dbReference>
<dbReference type="GO" id="GO:0005375">
    <property type="term" value="F:copper ion transmembrane transporter activity"/>
    <property type="evidence" value="ECO:0000314"/>
    <property type="project" value="UniProtKB"/>
</dbReference>
<dbReference type="GO" id="GO:0042802">
    <property type="term" value="F:identical protein binding"/>
    <property type="evidence" value="ECO:0000266"/>
    <property type="project" value="RGD"/>
</dbReference>
<dbReference type="GO" id="GO:0015080">
    <property type="term" value="F:silver ion transmembrane transporter activity"/>
    <property type="evidence" value="ECO:0000250"/>
    <property type="project" value="UniProtKB"/>
</dbReference>
<dbReference type="GO" id="GO:0042910">
    <property type="term" value="F:xenobiotic transmembrane transporter activity"/>
    <property type="evidence" value="ECO:0000250"/>
    <property type="project" value="UniProtKB"/>
</dbReference>
<dbReference type="GO" id="GO:0001525">
    <property type="term" value="P:angiogenesis"/>
    <property type="evidence" value="ECO:0000250"/>
    <property type="project" value="UniProtKB"/>
</dbReference>
<dbReference type="GO" id="GO:0072719">
    <property type="term" value="P:cellular response to cisplatin"/>
    <property type="evidence" value="ECO:0000314"/>
    <property type="project" value="RGD"/>
</dbReference>
<dbReference type="GO" id="GO:0015677">
    <property type="term" value="P:copper ion import"/>
    <property type="evidence" value="ECO:0000314"/>
    <property type="project" value="RGD"/>
</dbReference>
<dbReference type="GO" id="GO:0098705">
    <property type="term" value="P:copper ion import across plasma membrane"/>
    <property type="evidence" value="ECO:0000315"/>
    <property type="project" value="RGD"/>
</dbReference>
<dbReference type="GO" id="GO:0006825">
    <property type="term" value="P:copper ion transport"/>
    <property type="evidence" value="ECO:0000266"/>
    <property type="project" value="RGD"/>
</dbReference>
<dbReference type="GO" id="GO:0051649">
    <property type="term" value="P:establishment of localization in cell"/>
    <property type="evidence" value="ECO:0000266"/>
    <property type="project" value="RGD"/>
</dbReference>
<dbReference type="GO" id="GO:0006878">
    <property type="term" value="P:intracellular copper ion homeostasis"/>
    <property type="evidence" value="ECO:0000266"/>
    <property type="project" value="RGD"/>
</dbReference>
<dbReference type="GO" id="GO:0015679">
    <property type="term" value="P:plasma membrane copper ion transport"/>
    <property type="evidence" value="ECO:0000250"/>
    <property type="project" value="UniProtKB"/>
</dbReference>
<dbReference type="GO" id="GO:0051259">
    <property type="term" value="P:protein complex oligomerization"/>
    <property type="evidence" value="ECO:0000250"/>
    <property type="project" value="UniProtKB"/>
</dbReference>
<dbReference type="GO" id="GO:1902601">
    <property type="term" value="P:silver ion transmembrane transport"/>
    <property type="evidence" value="ECO:0000250"/>
    <property type="project" value="UniProtKB"/>
</dbReference>
<dbReference type="GO" id="GO:0055085">
    <property type="term" value="P:transmembrane transport"/>
    <property type="evidence" value="ECO:0000314"/>
    <property type="project" value="RGD"/>
</dbReference>
<dbReference type="GO" id="GO:0036324">
    <property type="term" value="P:vascular endothelial growth factor receptor-2 signaling pathway"/>
    <property type="evidence" value="ECO:0000250"/>
    <property type="project" value="UniProtKB"/>
</dbReference>
<dbReference type="GO" id="GO:0042908">
    <property type="term" value="P:xenobiotic transport"/>
    <property type="evidence" value="ECO:0000250"/>
    <property type="project" value="UniProtKB"/>
</dbReference>
<dbReference type="InterPro" id="IPR007274">
    <property type="entry name" value="Cop_transporter"/>
</dbReference>
<dbReference type="PANTHER" id="PTHR12483:SF22">
    <property type="entry name" value="HIGH AFFINITY COPPER UPTAKE PROTEIN 1"/>
    <property type="match status" value="1"/>
</dbReference>
<dbReference type="PANTHER" id="PTHR12483">
    <property type="entry name" value="SOLUTE CARRIER FAMILY 31 COPPER TRANSPORTERS"/>
    <property type="match status" value="1"/>
</dbReference>
<dbReference type="Pfam" id="PF04145">
    <property type="entry name" value="Ctr"/>
    <property type="match status" value="1"/>
</dbReference>